<reference key="1">
    <citation type="journal article" date="2008" name="Biol. Direct">
        <title>Complete genome sequence of the extremely acidophilic methanotroph isolate V4, Methylacidiphilum infernorum, a representative of the bacterial phylum Verrucomicrobia.</title>
        <authorList>
            <person name="Hou S."/>
            <person name="Makarova K.S."/>
            <person name="Saw J.H."/>
            <person name="Senin P."/>
            <person name="Ly B.V."/>
            <person name="Zhou Z."/>
            <person name="Ren Y."/>
            <person name="Wang J."/>
            <person name="Galperin M.Y."/>
            <person name="Omelchenko M.V."/>
            <person name="Wolf Y.I."/>
            <person name="Yutin N."/>
            <person name="Koonin E.V."/>
            <person name="Stott M.B."/>
            <person name="Mountain B.W."/>
            <person name="Crowe M.A."/>
            <person name="Smirnova A.V."/>
            <person name="Dunfield P.F."/>
            <person name="Feng L."/>
            <person name="Wang L."/>
            <person name="Alam M."/>
        </authorList>
    </citation>
    <scope>NUCLEOTIDE SEQUENCE [LARGE SCALE GENOMIC DNA]</scope>
    <source>
        <strain>Isolate V4</strain>
    </source>
</reference>
<name>RL22_METI4</name>
<accession>B3E0I9</accession>
<sequence>MEVRAIYKMARISPFKSRDVARSIKGMDARDAFNVLAFYPKKAARLIRKTLGSAIANAENNHNLRAQDLYVKGVFVDEGPKFRRYQPKARGSAGIIRKRTAHICVVLDEKENKS</sequence>
<feature type="chain" id="PRO_1000166071" description="Large ribosomal subunit protein uL22">
    <location>
        <begin position="1"/>
        <end position="114"/>
    </location>
</feature>
<gene>
    <name evidence="1" type="primary">rplV</name>
    <name type="ordered locus">Minf_0688</name>
</gene>
<dbReference type="EMBL" id="CP000975">
    <property type="protein sequence ID" value="ACD82743.1"/>
    <property type="molecule type" value="Genomic_DNA"/>
</dbReference>
<dbReference type="RefSeq" id="WP_012463025.1">
    <property type="nucleotide sequence ID" value="NC_010794.1"/>
</dbReference>
<dbReference type="SMR" id="B3E0I9"/>
<dbReference type="STRING" id="481448.Minf_0688"/>
<dbReference type="KEGG" id="min:Minf_0688"/>
<dbReference type="eggNOG" id="COG0091">
    <property type="taxonomic scope" value="Bacteria"/>
</dbReference>
<dbReference type="HOGENOM" id="CLU_083987_3_2_0"/>
<dbReference type="OrthoDB" id="9805969at2"/>
<dbReference type="Proteomes" id="UP000009149">
    <property type="component" value="Chromosome"/>
</dbReference>
<dbReference type="GO" id="GO:0022625">
    <property type="term" value="C:cytosolic large ribosomal subunit"/>
    <property type="evidence" value="ECO:0007669"/>
    <property type="project" value="TreeGrafter"/>
</dbReference>
<dbReference type="GO" id="GO:0019843">
    <property type="term" value="F:rRNA binding"/>
    <property type="evidence" value="ECO:0007669"/>
    <property type="project" value="UniProtKB-UniRule"/>
</dbReference>
<dbReference type="GO" id="GO:0003735">
    <property type="term" value="F:structural constituent of ribosome"/>
    <property type="evidence" value="ECO:0007669"/>
    <property type="project" value="InterPro"/>
</dbReference>
<dbReference type="GO" id="GO:0006412">
    <property type="term" value="P:translation"/>
    <property type="evidence" value="ECO:0007669"/>
    <property type="project" value="UniProtKB-UniRule"/>
</dbReference>
<dbReference type="CDD" id="cd00336">
    <property type="entry name" value="Ribosomal_L22"/>
    <property type="match status" value="1"/>
</dbReference>
<dbReference type="Gene3D" id="3.90.470.10">
    <property type="entry name" value="Ribosomal protein L22/L17"/>
    <property type="match status" value="1"/>
</dbReference>
<dbReference type="HAMAP" id="MF_01331_B">
    <property type="entry name" value="Ribosomal_uL22_B"/>
    <property type="match status" value="1"/>
</dbReference>
<dbReference type="InterPro" id="IPR001063">
    <property type="entry name" value="Ribosomal_uL22"/>
</dbReference>
<dbReference type="InterPro" id="IPR005727">
    <property type="entry name" value="Ribosomal_uL22_bac/chlpt-type"/>
</dbReference>
<dbReference type="InterPro" id="IPR047867">
    <property type="entry name" value="Ribosomal_uL22_bac/org-type"/>
</dbReference>
<dbReference type="InterPro" id="IPR036394">
    <property type="entry name" value="Ribosomal_uL22_sf"/>
</dbReference>
<dbReference type="NCBIfam" id="TIGR01044">
    <property type="entry name" value="rplV_bact"/>
    <property type="match status" value="1"/>
</dbReference>
<dbReference type="PANTHER" id="PTHR13501">
    <property type="entry name" value="CHLOROPLAST 50S RIBOSOMAL PROTEIN L22-RELATED"/>
    <property type="match status" value="1"/>
</dbReference>
<dbReference type="PANTHER" id="PTHR13501:SF8">
    <property type="entry name" value="LARGE RIBOSOMAL SUBUNIT PROTEIN UL22M"/>
    <property type="match status" value="1"/>
</dbReference>
<dbReference type="Pfam" id="PF00237">
    <property type="entry name" value="Ribosomal_L22"/>
    <property type="match status" value="1"/>
</dbReference>
<dbReference type="SUPFAM" id="SSF54843">
    <property type="entry name" value="Ribosomal protein L22"/>
    <property type="match status" value="1"/>
</dbReference>
<organism>
    <name type="scientific">Methylacidiphilum infernorum (isolate V4)</name>
    <name type="common">Methylokorus infernorum (strain V4)</name>
    <dbReference type="NCBI Taxonomy" id="481448"/>
    <lineage>
        <taxon>Bacteria</taxon>
        <taxon>Pseudomonadati</taxon>
        <taxon>Verrucomicrobiota</taxon>
        <taxon>Methylacidiphilae</taxon>
        <taxon>Methylacidiphilales</taxon>
        <taxon>Methylacidiphilaceae</taxon>
        <taxon>Methylacidiphilum (ex Ratnadevi et al. 2023)</taxon>
    </lineage>
</organism>
<evidence type="ECO:0000255" key="1">
    <source>
        <dbReference type="HAMAP-Rule" id="MF_01331"/>
    </source>
</evidence>
<evidence type="ECO:0000305" key="2"/>
<protein>
    <recommendedName>
        <fullName evidence="1">Large ribosomal subunit protein uL22</fullName>
    </recommendedName>
    <alternativeName>
        <fullName evidence="2">50S ribosomal protein L22</fullName>
    </alternativeName>
</protein>
<keyword id="KW-0687">Ribonucleoprotein</keyword>
<keyword id="KW-0689">Ribosomal protein</keyword>
<keyword id="KW-0694">RNA-binding</keyword>
<keyword id="KW-0699">rRNA-binding</keyword>
<proteinExistence type="inferred from homology"/>
<comment type="function">
    <text evidence="1">This protein binds specifically to 23S rRNA; its binding is stimulated by other ribosomal proteins, e.g. L4, L17, and L20. It is important during the early stages of 50S assembly. It makes multiple contacts with different domains of the 23S rRNA in the assembled 50S subunit and ribosome (By similarity).</text>
</comment>
<comment type="function">
    <text evidence="1">The globular domain of the protein is located near the polypeptide exit tunnel on the outside of the subunit, while an extended beta-hairpin is found that lines the wall of the exit tunnel in the center of the 70S ribosome.</text>
</comment>
<comment type="subunit">
    <text evidence="1">Part of the 50S ribosomal subunit.</text>
</comment>
<comment type="similarity">
    <text evidence="1">Belongs to the universal ribosomal protein uL22 family.</text>
</comment>